<evidence type="ECO:0000255" key="1">
    <source>
        <dbReference type="HAMAP-Rule" id="MF_00123"/>
    </source>
</evidence>
<name>SYR_PYRAE</name>
<sequence length="630" mass="71667">MDPLRQPREEFVKVLGEVSRELGLPEVPEVERTRRYGFFSARFHKYKVDHSRLAEVVNLIKNKRFEFLSSLSVDGLYLNADLNVSKVAELVFEAVVKMGRKYGFTEECVTGSYLVEHTSANPVHPLHIGHGRNAILGDSLARLLKFCGNKVETHFYVDDCGVQVMYAAMGYNAVKDEVKKRIEKSKPDVVIGHVYSATNAVAEIGRLKKELEKAQDDERKREILREIDEWVAVLKRLMDSEGDIISKIAEELGRRDLLNEAVELNRRYESGDPEAKGVVREVVDLVLKGQRETLARLGVEIDKWDYESELTVWSSEAMRIVSELQKRWPQYIEIKGGAVVFRADKFVQDYNLWDVLDLPRFIPPVTLTRSDGTTLYVTRDVAYALWQARQGFDKVIRVISTEQTHEQAHVRIILYALGYVDEAKKIVHYAYEMVNLPGMKMSARRGQYISLDEILDEAAERSASLVKEKNPEVSGVIAERVGVGSVRYAFLTTSPRKPIEFKWDVVLNLRQNSGTFLQYTYVRAYSILEKAGEIGNVPVPENMLAEERELVLKIAEWPSVVKEAAKSLRPDYVAEYLDGLALVFNSYYEKAPVLKAEESVRGFRIAIVNAVKTVLEAGFYILGIPTLTKM</sequence>
<gene>
    <name evidence="1" type="primary">argS</name>
    <name type="ordered locus">PAE3343</name>
</gene>
<reference key="1">
    <citation type="journal article" date="2002" name="Proc. Natl. Acad. Sci. U.S.A.">
        <title>Genome sequence of the hyperthermophilic crenarchaeon Pyrobaculum aerophilum.</title>
        <authorList>
            <person name="Fitz-Gibbon S.T."/>
            <person name="Ladner H."/>
            <person name="Kim U.-J."/>
            <person name="Stetter K.O."/>
            <person name="Simon M.I."/>
            <person name="Miller J.H."/>
        </authorList>
    </citation>
    <scope>NUCLEOTIDE SEQUENCE [LARGE SCALE GENOMIC DNA]</scope>
    <source>
        <strain>ATCC 51768 / DSM 7523 / JCM 9630 / CIP 104966 / NBRC 100827 / IM2</strain>
    </source>
</reference>
<comment type="catalytic activity">
    <reaction evidence="1">
        <text>tRNA(Arg) + L-arginine + ATP = L-arginyl-tRNA(Arg) + AMP + diphosphate</text>
        <dbReference type="Rhea" id="RHEA:20301"/>
        <dbReference type="Rhea" id="RHEA-COMP:9658"/>
        <dbReference type="Rhea" id="RHEA-COMP:9673"/>
        <dbReference type="ChEBI" id="CHEBI:30616"/>
        <dbReference type="ChEBI" id="CHEBI:32682"/>
        <dbReference type="ChEBI" id="CHEBI:33019"/>
        <dbReference type="ChEBI" id="CHEBI:78442"/>
        <dbReference type="ChEBI" id="CHEBI:78513"/>
        <dbReference type="ChEBI" id="CHEBI:456215"/>
        <dbReference type="EC" id="6.1.1.19"/>
    </reaction>
</comment>
<comment type="subcellular location">
    <subcellularLocation>
        <location evidence="1">Cytoplasm</location>
    </subcellularLocation>
</comment>
<comment type="similarity">
    <text evidence="1">Belongs to the class-I aminoacyl-tRNA synthetase family.</text>
</comment>
<feature type="chain" id="PRO_0000151651" description="Arginine--tRNA ligase">
    <location>
        <begin position="1"/>
        <end position="630"/>
    </location>
</feature>
<feature type="short sequence motif" description="'HIGH' region">
    <location>
        <begin position="120"/>
        <end position="130"/>
    </location>
</feature>
<keyword id="KW-0030">Aminoacyl-tRNA synthetase</keyword>
<keyword id="KW-0067">ATP-binding</keyword>
<keyword id="KW-0963">Cytoplasm</keyword>
<keyword id="KW-0436">Ligase</keyword>
<keyword id="KW-0547">Nucleotide-binding</keyword>
<keyword id="KW-0648">Protein biosynthesis</keyword>
<keyword id="KW-1185">Reference proteome</keyword>
<dbReference type="EC" id="6.1.1.19" evidence="1"/>
<dbReference type="EMBL" id="AE009441">
    <property type="protein sequence ID" value="AAL64855.1"/>
    <property type="molecule type" value="Genomic_DNA"/>
</dbReference>
<dbReference type="RefSeq" id="WP_011009322.1">
    <property type="nucleotide sequence ID" value="NC_003364.1"/>
</dbReference>
<dbReference type="SMR" id="Q8ZTA8"/>
<dbReference type="FunCoup" id="Q8ZTA8">
    <property type="interactions" value="233"/>
</dbReference>
<dbReference type="STRING" id="178306.PAE3343"/>
<dbReference type="EnsemblBacteria" id="AAL64855">
    <property type="protein sequence ID" value="AAL64855"/>
    <property type="gene ID" value="PAE3343"/>
</dbReference>
<dbReference type="GeneID" id="1464045"/>
<dbReference type="KEGG" id="pai:PAE3343"/>
<dbReference type="PATRIC" id="fig|178306.9.peg.2519"/>
<dbReference type="eggNOG" id="arCOG00487">
    <property type="taxonomic scope" value="Archaea"/>
</dbReference>
<dbReference type="HOGENOM" id="CLU_006406_6_1_2"/>
<dbReference type="InParanoid" id="Q8ZTA8"/>
<dbReference type="Proteomes" id="UP000002439">
    <property type="component" value="Chromosome"/>
</dbReference>
<dbReference type="GO" id="GO:0005737">
    <property type="term" value="C:cytoplasm"/>
    <property type="evidence" value="ECO:0007669"/>
    <property type="project" value="UniProtKB-SubCell"/>
</dbReference>
<dbReference type="GO" id="GO:0004814">
    <property type="term" value="F:arginine-tRNA ligase activity"/>
    <property type="evidence" value="ECO:0000318"/>
    <property type="project" value="GO_Central"/>
</dbReference>
<dbReference type="GO" id="GO:0005524">
    <property type="term" value="F:ATP binding"/>
    <property type="evidence" value="ECO:0007669"/>
    <property type="project" value="UniProtKB-UniRule"/>
</dbReference>
<dbReference type="GO" id="GO:0006420">
    <property type="term" value="P:arginyl-tRNA aminoacylation"/>
    <property type="evidence" value="ECO:0000318"/>
    <property type="project" value="GO_Central"/>
</dbReference>
<dbReference type="FunFam" id="3.40.50.620:FF:000659">
    <property type="entry name" value="DALR anticodon binding domain containing protein"/>
    <property type="match status" value="1"/>
</dbReference>
<dbReference type="Gene3D" id="3.40.50.620">
    <property type="entry name" value="HUPs"/>
    <property type="match status" value="2"/>
</dbReference>
<dbReference type="Gene3D" id="1.10.730.10">
    <property type="entry name" value="Isoleucyl-tRNA Synthetase, Domain 1"/>
    <property type="match status" value="1"/>
</dbReference>
<dbReference type="HAMAP" id="MF_00123">
    <property type="entry name" value="Arg_tRNA_synth"/>
    <property type="match status" value="1"/>
</dbReference>
<dbReference type="InterPro" id="IPR001278">
    <property type="entry name" value="Arg-tRNA-ligase"/>
</dbReference>
<dbReference type="InterPro" id="IPR035684">
    <property type="entry name" value="ArgRS_core"/>
</dbReference>
<dbReference type="InterPro" id="IPR008909">
    <property type="entry name" value="DALR_anticod-bd"/>
</dbReference>
<dbReference type="InterPro" id="IPR014729">
    <property type="entry name" value="Rossmann-like_a/b/a_fold"/>
</dbReference>
<dbReference type="InterPro" id="IPR009080">
    <property type="entry name" value="tRNAsynth_Ia_anticodon-bd"/>
</dbReference>
<dbReference type="NCBIfam" id="TIGR00456">
    <property type="entry name" value="argS"/>
    <property type="match status" value="1"/>
</dbReference>
<dbReference type="NCBIfam" id="NF002446">
    <property type="entry name" value="PRK01611.3-3"/>
    <property type="match status" value="1"/>
</dbReference>
<dbReference type="PANTHER" id="PTHR11956:SF5">
    <property type="entry name" value="ARGININE--TRNA LIGASE, CYTOPLASMIC"/>
    <property type="match status" value="1"/>
</dbReference>
<dbReference type="PANTHER" id="PTHR11956">
    <property type="entry name" value="ARGINYL-TRNA SYNTHETASE"/>
    <property type="match status" value="1"/>
</dbReference>
<dbReference type="Pfam" id="PF05746">
    <property type="entry name" value="DALR_1"/>
    <property type="match status" value="1"/>
</dbReference>
<dbReference type="Pfam" id="PF00750">
    <property type="entry name" value="tRNA-synt_1d"/>
    <property type="match status" value="2"/>
</dbReference>
<dbReference type="PRINTS" id="PR01038">
    <property type="entry name" value="TRNASYNTHARG"/>
</dbReference>
<dbReference type="SMART" id="SM00836">
    <property type="entry name" value="DALR_1"/>
    <property type="match status" value="1"/>
</dbReference>
<dbReference type="SUPFAM" id="SSF47323">
    <property type="entry name" value="Anticodon-binding domain of a subclass of class I aminoacyl-tRNA synthetases"/>
    <property type="match status" value="1"/>
</dbReference>
<dbReference type="SUPFAM" id="SSF52374">
    <property type="entry name" value="Nucleotidylyl transferase"/>
    <property type="match status" value="1"/>
</dbReference>
<protein>
    <recommendedName>
        <fullName evidence="1">Arginine--tRNA ligase</fullName>
        <ecNumber evidence="1">6.1.1.19</ecNumber>
    </recommendedName>
    <alternativeName>
        <fullName evidence="1">Arginyl-tRNA synthetase</fullName>
        <shortName evidence="1">ArgRS</shortName>
    </alternativeName>
</protein>
<proteinExistence type="inferred from homology"/>
<organism>
    <name type="scientific">Pyrobaculum aerophilum (strain ATCC 51768 / DSM 7523 / JCM 9630 / CIP 104966 / NBRC 100827 / IM2)</name>
    <dbReference type="NCBI Taxonomy" id="178306"/>
    <lineage>
        <taxon>Archaea</taxon>
        <taxon>Thermoproteota</taxon>
        <taxon>Thermoprotei</taxon>
        <taxon>Thermoproteales</taxon>
        <taxon>Thermoproteaceae</taxon>
        <taxon>Pyrobaculum</taxon>
    </lineage>
</organism>
<accession>Q8ZTA8</accession>